<organism>
    <name type="scientific">Pisum sativum</name>
    <name type="common">Garden pea</name>
    <name type="synonym">Lathyrus oleraceus</name>
    <dbReference type="NCBI Taxonomy" id="3888"/>
    <lineage>
        <taxon>Eukaryota</taxon>
        <taxon>Viridiplantae</taxon>
        <taxon>Streptophyta</taxon>
        <taxon>Embryophyta</taxon>
        <taxon>Tracheophyta</taxon>
        <taxon>Spermatophyta</taxon>
        <taxon>Magnoliopsida</taxon>
        <taxon>eudicotyledons</taxon>
        <taxon>Gunneridae</taxon>
        <taxon>Pentapetalae</taxon>
        <taxon>rosids</taxon>
        <taxon>fabids</taxon>
        <taxon>Fabales</taxon>
        <taxon>Fabaceae</taxon>
        <taxon>Papilionoideae</taxon>
        <taxon>50 kb inversion clade</taxon>
        <taxon>NPAAA clade</taxon>
        <taxon>Hologalegina</taxon>
        <taxon>IRL clade</taxon>
        <taxon>Fabeae</taxon>
        <taxon>Pisum</taxon>
    </lineage>
</organism>
<keyword id="KW-0238">DNA-binding</keyword>
<keyword id="KW-0539">Nucleus</keyword>
<keyword id="KW-0804">Transcription</keyword>
<keyword id="KW-0805">Transcription regulation</keyword>
<evidence type="ECO:0000255" key="1">
    <source>
        <dbReference type="PROSITE-ProRule" id="PRU00251"/>
    </source>
</evidence>
<evidence type="ECO:0000255" key="2">
    <source>
        <dbReference type="PROSITE-ProRule" id="PRU00629"/>
    </source>
</evidence>
<evidence type="ECO:0000269" key="3">
    <source>
    </source>
</evidence>
<evidence type="ECO:0000305" key="4"/>
<evidence type="ECO:0000312" key="5">
    <source>
        <dbReference type="EMBL" id="CAA11258.1"/>
    </source>
</evidence>
<feature type="chain" id="PRO_0000238616" description="MADS-box transcription factor 1">
    <location>
        <begin position="1"/>
        <end position="247"/>
    </location>
</feature>
<feature type="domain" description="MADS-box" evidence="1">
    <location>
        <begin position="1"/>
        <end position="61"/>
    </location>
</feature>
<feature type="domain" description="K-box" evidence="2">
    <location>
        <begin position="91"/>
        <end position="181"/>
    </location>
</feature>
<reference evidence="4 5" key="1">
    <citation type="journal article" date="1998" name="Plant Mol. Biol.">
        <title>A MADS box transcription factor of the AP1/AGL9 subfamily is also expressed in the seed coat of pea (Pisum sativum) during development.</title>
        <authorList>
            <person name="Buchner P."/>
            <person name="Boutin J.-P."/>
        </authorList>
    </citation>
    <scope>NUCLEOTIDE SEQUENCE [MRNA]</scope>
    <scope>TISSUE SPECIFICITY</scope>
    <scope>DEVELOPMENTAL STAGE</scope>
    <source>
        <strain evidence="3">cv. Finale</strain>
        <tissue evidence="5">Seed coat</tissue>
    </source>
</reference>
<comment type="function">
    <text evidence="3">Probable transcription factor.</text>
</comment>
<comment type="subcellular location">
    <subcellularLocation>
        <location evidence="4">Nucleus</location>
    </subcellularLocation>
</comment>
<comment type="tissue specificity">
    <text evidence="3">Expressed abundantly in the seed coat and to lesser extent in young buds, carpels, petals, and stamen.</text>
</comment>
<comment type="developmental stage">
    <text evidence="3">During seed development, highest expression is found in the seed coat of young seeds. Expression decreases steadily during further seed development but is detectable until desiccation begins.</text>
</comment>
<proteinExistence type="evidence at transcript level"/>
<accession>O65874</accession>
<dbReference type="EMBL" id="AJ223318">
    <property type="protein sequence ID" value="CAA11258.1"/>
    <property type="molecule type" value="mRNA"/>
</dbReference>
<dbReference type="PIR" id="T06543">
    <property type="entry name" value="T06543"/>
</dbReference>
<dbReference type="SMR" id="O65874"/>
<dbReference type="GO" id="GO:0005634">
    <property type="term" value="C:nucleus"/>
    <property type="evidence" value="ECO:0007669"/>
    <property type="project" value="UniProtKB-SubCell"/>
</dbReference>
<dbReference type="GO" id="GO:0003700">
    <property type="term" value="F:DNA-binding transcription factor activity"/>
    <property type="evidence" value="ECO:0000303"/>
    <property type="project" value="UniProtKB"/>
</dbReference>
<dbReference type="GO" id="GO:0046983">
    <property type="term" value="F:protein dimerization activity"/>
    <property type="evidence" value="ECO:0007669"/>
    <property type="project" value="InterPro"/>
</dbReference>
<dbReference type="GO" id="GO:0000977">
    <property type="term" value="F:RNA polymerase II transcription regulatory region sequence-specific DNA binding"/>
    <property type="evidence" value="ECO:0007669"/>
    <property type="project" value="InterPro"/>
</dbReference>
<dbReference type="GO" id="GO:0045944">
    <property type="term" value="P:positive regulation of transcription by RNA polymerase II"/>
    <property type="evidence" value="ECO:0007669"/>
    <property type="project" value="InterPro"/>
</dbReference>
<dbReference type="GO" id="GO:0006355">
    <property type="term" value="P:regulation of DNA-templated transcription"/>
    <property type="evidence" value="ECO:0000303"/>
    <property type="project" value="UniProtKB"/>
</dbReference>
<dbReference type="GO" id="GO:0009888">
    <property type="term" value="P:tissue development"/>
    <property type="evidence" value="ECO:0000303"/>
    <property type="project" value="UniProtKB"/>
</dbReference>
<dbReference type="CDD" id="cd00265">
    <property type="entry name" value="MADS_MEF2_like"/>
    <property type="match status" value="1"/>
</dbReference>
<dbReference type="FunFam" id="3.40.1810.10:FF:000011">
    <property type="entry name" value="MADS-box transcription factor 7"/>
    <property type="match status" value="1"/>
</dbReference>
<dbReference type="Gene3D" id="3.40.1810.10">
    <property type="entry name" value="Transcription factor, MADS-box"/>
    <property type="match status" value="1"/>
</dbReference>
<dbReference type="InterPro" id="IPR050142">
    <property type="entry name" value="MADS-box/MEF2_TF"/>
</dbReference>
<dbReference type="InterPro" id="IPR033896">
    <property type="entry name" value="MEF2-like_N"/>
</dbReference>
<dbReference type="InterPro" id="IPR002487">
    <property type="entry name" value="TF_Kbox"/>
</dbReference>
<dbReference type="InterPro" id="IPR002100">
    <property type="entry name" value="TF_MADSbox"/>
</dbReference>
<dbReference type="InterPro" id="IPR036879">
    <property type="entry name" value="TF_MADSbox_sf"/>
</dbReference>
<dbReference type="PANTHER" id="PTHR48019">
    <property type="entry name" value="SERUM RESPONSE FACTOR HOMOLOG"/>
    <property type="match status" value="1"/>
</dbReference>
<dbReference type="Pfam" id="PF01486">
    <property type="entry name" value="K-box"/>
    <property type="match status" value="1"/>
</dbReference>
<dbReference type="Pfam" id="PF00319">
    <property type="entry name" value="SRF-TF"/>
    <property type="match status" value="1"/>
</dbReference>
<dbReference type="PRINTS" id="PR00404">
    <property type="entry name" value="MADSDOMAIN"/>
</dbReference>
<dbReference type="SMART" id="SM00432">
    <property type="entry name" value="MADS"/>
    <property type="match status" value="1"/>
</dbReference>
<dbReference type="SUPFAM" id="SSF55455">
    <property type="entry name" value="SRF-like"/>
    <property type="match status" value="1"/>
</dbReference>
<dbReference type="PROSITE" id="PS51297">
    <property type="entry name" value="K_BOX"/>
    <property type="match status" value="1"/>
</dbReference>
<dbReference type="PROSITE" id="PS50066">
    <property type="entry name" value="MADS_BOX_2"/>
    <property type="match status" value="1"/>
</dbReference>
<name>MTF1_PEA</name>
<sequence length="247" mass="28158">MGRGRVELKRVENKINRQVTFAKRRNGLLKKAYELSVLCDAEVALIVFSNRGKLYEFCSTSSMLKTLERYQKCNYGAPEGNVTSKEALVLELSSQQEYLKLKARYESLQRSQRNLMGEDLGPLSSKDLETLERQLDSSLKQIRSTRTQFMLDQLGDLQRKEHLLCEANRALRQRMEGYQINSLQLNLSAEDMGYGRHHQGHTHGDELFQVQPIECEPTLQIGYHQGDPGSVVTAGPSMNNYMGGWLP</sequence>
<gene>
    <name evidence="5" type="primary">MTF1</name>
</gene>
<protein>
    <recommendedName>
        <fullName>MADS-box transcription factor 1</fullName>
    </recommendedName>
</protein>